<organism>
    <name type="scientific">Haemophilus influenzae (strain ATCC 51907 / DSM 11121 / KW20 / Rd)</name>
    <dbReference type="NCBI Taxonomy" id="71421"/>
    <lineage>
        <taxon>Bacteria</taxon>
        <taxon>Pseudomonadati</taxon>
        <taxon>Pseudomonadota</taxon>
        <taxon>Gammaproteobacteria</taxon>
        <taxon>Pasteurellales</taxon>
        <taxon>Pasteurellaceae</taxon>
        <taxon>Haemophilus</taxon>
    </lineage>
</organism>
<reference key="1">
    <citation type="journal article" date="1995" name="Science">
        <title>Whole-genome random sequencing and assembly of Haemophilus influenzae Rd.</title>
        <authorList>
            <person name="Fleischmann R.D."/>
            <person name="Adams M.D."/>
            <person name="White O."/>
            <person name="Clayton R.A."/>
            <person name="Kirkness E.F."/>
            <person name="Kerlavage A.R."/>
            <person name="Bult C.J."/>
            <person name="Tomb J.-F."/>
            <person name="Dougherty B.A."/>
            <person name="Merrick J.M."/>
            <person name="McKenney K."/>
            <person name="Sutton G.G."/>
            <person name="FitzHugh W."/>
            <person name="Fields C.A."/>
            <person name="Gocayne J.D."/>
            <person name="Scott J.D."/>
            <person name="Shirley R."/>
            <person name="Liu L.-I."/>
            <person name="Glodek A."/>
            <person name="Kelley J.M."/>
            <person name="Weidman J.F."/>
            <person name="Phillips C.A."/>
            <person name="Spriggs T."/>
            <person name="Hedblom E."/>
            <person name="Cotton M.D."/>
            <person name="Utterback T.R."/>
            <person name="Hanna M.C."/>
            <person name="Nguyen D.T."/>
            <person name="Saudek D.M."/>
            <person name="Brandon R.C."/>
            <person name="Fine L.D."/>
            <person name="Fritchman J.L."/>
            <person name="Fuhrmann J.L."/>
            <person name="Geoghagen N.S.M."/>
            <person name="Gnehm C.L."/>
            <person name="McDonald L.A."/>
            <person name="Small K.V."/>
            <person name="Fraser C.M."/>
            <person name="Smith H.O."/>
            <person name="Venter J.C."/>
        </authorList>
    </citation>
    <scope>NUCLEOTIDE SEQUENCE [LARGE SCALE GENOMIC DNA]</scope>
    <source>
        <strain>ATCC 51907 / DSM 11121 / KW20 / Rd</strain>
    </source>
</reference>
<comment type="function">
    <text evidence="2">Catalyzes the condensation of para-aminobenzoate (pABA) with 6-hydroxymethyl-7,8-dihydropterin diphosphate (DHPt-PP) to form 7,8-dihydropteroate (H2Pte), the immediate precursor of folate derivatives.</text>
</comment>
<comment type="catalytic activity">
    <reaction evidence="2">
        <text>(7,8-dihydropterin-6-yl)methyl diphosphate + 4-aminobenzoate = 7,8-dihydropteroate + diphosphate</text>
        <dbReference type="Rhea" id="RHEA:19949"/>
        <dbReference type="ChEBI" id="CHEBI:17836"/>
        <dbReference type="ChEBI" id="CHEBI:17839"/>
        <dbReference type="ChEBI" id="CHEBI:33019"/>
        <dbReference type="ChEBI" id="CHEBI:72950"/>
        <dbReference type="EC" id="2.5.1.15"/>
    </reaction>
</comment>
<comment type="cofactor">
    <cofactor evidence="2">
        <name>Mg(2+)</name>
        <dbReference type="ChEBI" id="CHEBI:18420"/>
    </cofactor>
</comment>
<comment type="pathway">
    <text>Cofactor biosynthesis; tetrahydrofolate biosynthesis; 7,8-dihydrofolate from 2-amino-4-hydroxy-6-hydroxymethyl-7,8-dihydropteridine diphosphate and 4-aminobenzoate: step 1/2.</text>
</comment>
<comment type="subunit">
    <text evidence="1">Homodimer.</text>
</comment>
<comment type="similarity">
    <text evidence="5">Belongs to the DHPS family.</text>
</comment>
<keyword id="KW-0289">Folate biosynthesis</keyword>
<keyword id="KW-0460">Magnesium</keyword>
<keyword id="KW-0479">Metal-binding</keyword>
<keyword id="KW-1185">Reference proteome</keyword>
<keyword id="KW-0808">Transferase</keyword>
<accession>P43776</accession>
<feature type="chain" id="PRO_0000168210" description="Dihydropteroate synthase">
    <location>
        <begin position="1"/>
        <end position="275"/>
    </location>
</feature>
<feature type="domain" description="Pterin-binding" evidence="4">
    <location>
        <begin position="15"/>
        <end position="267"/>
    </location>
</feature>
<feature type="binding site" evidence="3">
    <location>
        <position position="22"/>
    </location>
    <ligand>
        <name>Mg(2+)</name>
        <dbReference type="ChEBI" id="CHEBI:18420"/>
    </ligand>
</feature>
<feature type="binding site" evidence="2">
    <location>
        <position position="62"/>
    </location>
    <ligand>
        <name>(7,8-dihydropterin-6-yl)methyl diphosphate</name>
        <dbReference type="ChEBI" id="CHEBI:72950"/>
    </ligand>
</feature>
<feature type="binding site" evidence="2">
    <location>
        <position position="96"/>
    </location>
    <ligand>
        <name>(7,8-dihydropterin-6-yl)methyl diphosphate</name>
        <dbReference type="ChEBI" id="CHEBI:72950"/>
    </ligand>
</feature>
<feature type="binding site" evidence="2">
    <location>
        <position position="115"/>
    </location>
    <ligand>
        <name>(7,8-dihydropterin-6-yl)methyl diphosphate</name>
        <dbReference type="ChEBI" id="CHEBI:72950"/>
    </ligand>
</feature>
<feature type="binding site" evidence="2">
    <location>
        <position position="185"/>
    </location>
    <ligand>
        <name>(7,8-dihydropterin-6-yl)methyl diphosphate</name>
        <dbReference type="ChEBI" id="CHEBI:72950"/>
    </ligand>
</feature>
<feature type="binding site" evidence="2">
    <location>
        <position position="221"/>
    </location>
    <ligand>
        <name>(7,8-dihydropterin-6-yl)methyl diphosphate</name>
        <dbReference type="ChEBI" id="CHEBI:72950"/>
    </ligand>
</feature>
<feature type="binding site" evidence="2">
    <location>
        <begin position="255"/>
        <end position="257"/>
    </location>
    <ligand>
        <name>(7,8-dihydropterin-6-yl)methyl diphosphate</name>
        <dbReference type="ChEBI" id="CHEBI:72950"/>
    </ligand>
</feature>
<gene>
    <name type="primary">folP-A</name>
    <name type="ordered locus">HI_1336</name>
</gene>
<gene>
    <name type="primary">folP-B</name>
    <name type="ordered locus">HI_1464</name>
</gene>
<evidence type="ECO:0000250" key="1"/>
<evidence type="ECO:0000250" key="2">
    <source>
        <dbReference type="UniProtKB" id="P0AC13"/>
    </source>
</evidence>
<evidence type="ECO:0000250" key="3">
    <source>
        <dbReference type="UniProtKB" id="P9WND1"/>
    </source>
</evidence>
<evidence type="ECO:0000255" key="4">
    <source>
        <dbReference type="PROSITE-ProRule" id="PRU00334"/>
    </source>
</evidence>
<evidence type="ECO:0000305" key="5"/>
<name>DHPS_HAEIN</name>
<dbReference type="EC" id="2.5.1.15"/>
<dbReference type="EMBL" id="L42023">
    <property type="protein sequence ID" value="AAC22983.1"/>
    <property type="molecule type" value="Genomic_DNA"/>
</dbReference>
<dbReference type="EMBL" id="L42023">
    <property type="protein sequence ID" value="AAC23111.1"/>
    <property type="molecule type" value="Genomic_DNA"/>
</dbReference>
<dbReference type="PIR" id="E64117">
    <property type="entry name" value="E64117"/>
</dbReference>
<dbReference type="RefSeq" id="NP_439487.1">
    <property type="nucleotide sequence ID" value="NC_000907.1"/>
</dbReference>
<dbReference type="RefSeq" id="NP_439615.1">
    <property type="nucleotide sequence ID" value="NC_000907.1"/>
</dbReference>
<dbReference type="SMR" id="P43776"/>
<dbReference type="STRING" id="71421.HI_1336"/>
<dbReference type="EnsemblBacteria" id="AAC22983">
    <property type="protein sequence ID" value="AAC22983"/>
    <property type="gene ID" value="HI_1336"/>
</dbReference>
<dbReference type="EnsemblBacteria" id="AAC23111">
    <property type="protein sequence ID" value="AAC23111"/>
    <property type="gene ID" value="HI_1464"/>
</dbReference>
<dbReference type="KEGG" id="hin:HI_1336"/>
<dbReference type="KEGG" id="hin:HI_1464"/>
<dbReference type="PATRIC" id="fig|71421.8.peg.1388"/>
<dbReference type="eggNOG" id="COG0294">
    <property type="taxonomic scope" value="Bacteria"/>
</dbReference>
<dbReference type="HOGENOM" id="CLU_008023_0_3_6"/>
<dbReference type="OrthoDB" id="9811744at2"/>
<dbReference type="PhylomeDB" id="P43776"/>
<dbReference type="UniPathway" id="UPA00077">
    <property type="reaction ID" value="UER00156"/>
</dbReference>
<dbReference type="Proteomes" id="UP000000579">
    <property type="component" value="Chromosome"/>
</dbReference>
<dbReference type="GO" id="GO:0005829">
    <property type="term" value="C:cytosol"/>
    <property type="evidence" value="ECO:0000318"/>
    <property type="project" value="GO_Central"/>
</dbReference>
<dbReference type="GO" id="GO:0004156">
    <property type="term" value="F:dihydropteroate synthase activity"/>
    <property type="evidence" value="ECO:0000318"/>
    <property type="project" value="GO_Central"/>
</dbReference>
<dbReference type="GO" id="GO:0046872">
    <property type="term" value="F:metal ion binding"/>
    <property type="evidence" value="ECO:0007669"/>
    <property type="project" value="UniProtKB-KW"/>
</dbReference>
<dbReference type="GO" id="GO:0046656">
    <property type="term" value="P:folic acid biosynthetic process"/>
    <property type="evidence" value="ECO:0007669"/>
    <property type="project" value="UniProtKB-KW"/>
</dbReference>
<dbReference type="GO" id="GO:0046654">
    <property type="term" value="P:tetrahydrofolate biosynthetic process"/>
    <property type="evidence" value="ECO:0000318"/>
    <property type="project" value="GO_Central"/>
</dbReference>
<dbReference type="CDD" id="cd00739">
    <property type="entry name" value="DHPS"/>
    <property type="match status" value="1"/>
</dbReference>
<dbReference type="FunFam" id="3.20.20.20:FF:000004">
    <property type="entry name" value="Dihydropteroate synthase"/>
    <property type="match status" value="1"/>
</dbReference>
<dbReference type="Gene3D" id="3.20.20.20">
    <property type="entry name" value="Dihydropteroate synthase-like"/>
    <property type="match status" value="1"/>
</dbReference>
<dbReference type="InterPro" id="IPR045031">
    <property type="entry name" value="DHP_synth-like"/>
</dbReference>
<dbReference type="InterPro" id="IPR006390">
    <property type="entry name" value="DHP_synth_dom"/>
</dbReference>
<dbReference type="InterPro" id="IPR011005">
    <property type="entry name" value="Dihydropteroate_synth-like_sf"/>
</dbReference>
<dbReference type="InterPro" id="IPR000489">
    <property type="entry name" value="Pterin-binding_dom"/>
</dbReference>
<dbReference type="NCBIfam" id="TIGR01496">
    <property type="entry name" value="DHPS"/>
    <property type="match status" value="1"/>
</dbReference>
<dbReference type="PANTHER" id="PTHR20941">
    <property type="entry name" value="FOLATE SYNTHESIS PROTEINS"/>
    <property type="match status" value="1"/>
</dbReference>
<dbReference type="PANTHER" id="PTHR20941:SF1">
    <property type="entry name" value="FOLIC ACID SYNTHESIS PROTEIN FOL1"/>
    <property type="match status" value="1"/>
</dbReference>
<dbReference type="Pfam" id="PF00809">
    <property type="entry name" value="Pterin_bind"/>
    <property type="match status" value="1"/>
</dbReference>
<dbReference type="SUPFAM" id="SSF51717">
    <property type="entry name" value="Dihydropteroate synthetase-like"/>
    <property type="match status" value="1"/>
</dbReference>
<dbReference type="PROSITE" id="PS00792">
    <property type="entry name" value="DHPS_1"/>
    <property type="match status" value="1"/>
</dbReference>
<dbReference type="PROSITE" id="PS00793">
    <property type="entry name" value="DHPS_2"/>
    <property type="match status" value="1"/>
</dbReference>
<dbReference type="PROSITE" id="PS50972">
    <property type="entry name" value="PTERIN_BINDING"/>
    <property type="match status" value="1"/>
</dbReference>
<proteinExistence type="inferred from homology"/>
<sequence>MKLYANNKCLDLSVPQIMGILNFTPDSFSDSGQFFSLDKALFQVEKMLEEGATIIDIGGESTRPNADEVSEQEELHRVVPVVEAVRNRFDCWISVDSSKAVVMREAANVGMDLINDIRALQEPNALETAVKLALPVCIMHMQGQPRTMQANPYYENVVQDVLAFLQKRTNECLSAGIKKENLIWDMGFGFGKSVQHNYQLLQNLNEFCQIGYPVLAGLSRKSMIGAVLDKPVDQRIIGSAAGALIAVQKGAKILRVHDVAATSDMLKVWQATANA</sequence>
<protein>
    <recommendedName>
        <fullName>Dihydropteroate synthase</fullName>
        <shortName>DHPS</shortName>
        <ecNumber>2.5.1.15</ecNumber>
    </recommendedName>
    <alternativeName>
        <fullName>Dihydropteroate pyrophosphorylase</fullName>
    </alternativeName>
</protein>